<sequence length="299" mass="33848">MIPIKTPKGVFNVWTKRIGNNPKVKVLLLAGGPGFPHDYLEAFESYFPGEGIEFYYYDELGNGNSDKPGDSSRYNVASAVDEVEQVRQALKLDSSNFYLFGHSWGGALGMEYAIKYQNNLKALIVSNMVASGKEFNRYVQQVLVKQLPPAILDTINDLSARNDYSNPKYSELVTRHFYARFICRLPLDQWPEPLNRAFSKVNTPYYLTLQGPSELGIIGSLQTWDISARLKEIAVPALFIGAGYDEMDPEHIKWMSQQVPHGQFLYCANGSHLSMYDQQPFYMNGIIRFIKEVNNSSAN</sequence>
<protein>
    <recommendedName>
        <fullName evidence="1">Proline iminopeptidase</fullName>
        <shortName evidence="1">PIP</shortName>
        <ecNumber>3.4.11.5</ecNumber>
    </recommendedName>
    <alternativeName>
        <fullName evidence="1">Prolyl aminopeptidase</fullName>
        <shortName evidence="1">PAP</shortName>
    </alternativeName>
</protein>
<dbReference type="EC" id="3.4.11.5"/>
<dbReference type="EMBL" id="CP001699">
    <property type="protein sequence ID" value="ACU57761.1"/>
    <property type="status" value="ALT_INIT"/>
    <property type="molecule type" value="Genomic_DNA"/>
</dbReference>
<dbReference type="RefSeq" id="WP_012787937.1">
    <property type="nucleotide sequence ID" value="NC_013132.1"/>
</dbReference>
<dbReference type="SMR" id="C7PDD8"/>
<dbReference type="STRING" id="485918.Cpin_0261"/>
<dbReference type="ESTHER" id="chipd-pip">
    <property type="family name" value="Proline_iminopeptidase"/>
</dbReference>
<dbReference type="KEGG" id="cpi:Cpin_0261"/>
<dbReference type="eggNOG" id="COG0596">
    <property type="taxonomic scope" value="Bacteria"/>
</dbReference>
<dbReference type="HOGENOM" id="CLU_020336_15_0_10"/>
<dbReference type="OrthoDB" id="9796770at2"/>
<dbReference type="Proteomes" id="UP000002215">
    <property type="component" value="Chromosome"/>
</dbReference>
<dbReference type="GO" id="GO:0016020">
    <property type="term" value="C:membrane"/>
    <property type="evidence" value="ECO:0007669"/>
    <property type="project" value="TreeGrafter"/>
</dbReference>
<dbReference type="GO" id="GO:0004177">
    <property type="term" value="F:aminopeptidase activity"/>
    <property type="evidence" value="ECO:0007669"/>
    <property type="project" value="UniProtKB-KW"/>
</dbReference>
<dbReference type="GO" id="GO:0006508">
    <property type="term" value="P:proteolysis"/>
    <property type="evidence" value="ECO:0007669"/>
    <property type="project" value="UniProtKB-KW"/>
</dbReference>
<dbReference type="Gene3D" id="3.40.50.1820">
    <property type="entry name" value="alpha/beta hydrolase"/>
    <property type="match status" value="1"/>
</dbReference>
<dbReference type="InterPro" id="IPR000073">
    <property type="entry name" value="AB_hydrolase_1"/>
</dbReference>
<dbReference type="InterPro" id="IPR029058">
    <property type="entry name" value="AB_hydrolase_fold"/>
</dbReference>
<dbReference type="InterPro" id="IPR050266">
    <property type="entry name" value="AB_hydrolase_sf"/>
</dbReference>
<dbReference type="InterPro" id="IPR002410">
    <property type="entry name" value="Peptidase_S33"/>
</dbReference>
<dbReference type="InterPro" id="IPR005945">
    <property type="entry name" value="Pro_imino_pep"/>
</dbReference>
<dbReference type="NCBIfam" id="TIGR01250">
    <property type="entry name" value="pro_imino_pep_2"/>
    <property type="match status" value="1"/>
</dbReference>
<dbReference type="PANTHER" id="PTHR43798:SF33">
    <property type="entry name" value="HYDROLASE, PUTATIVE (AFU_ORTHOLOGUE AFUA_2G14860)-RELATED"/>
    <property type="match status" value="1"/>
</dbReference>
<dbReference type="PANTHER" id="PTHR43798">
    <property type="entry name" value="MONOACYLGLYCEROL LIPASE"/>
    <property type="match status" value="1"/>
</dbReference>
<dbReference type="Pfam" id="PF00561">
    <property type="entry name" value="Abhydrolase_1"/>
    <property type="match status" value="1"/>
</dbReference>
<dbReference type="PIRSF" id="PIRSF005539">
    <property type="entry name" value="Pept_S33_TRI_F1"/>
    <property type="match status" value="1"/>
</dbReference>
<dbReference type="PRINTS" id="PR00793">
    <property type="entry name" value="PROAMNOPTASE"/>
</dbReference>
<dbReference type="SUPFAM" id="SSF53474">
    <property type="entry name" value="alpha/beta-Hydrolases"/>
    <property type="match status" value="1"/>
</dbReference>
<proteinExistence type="inferred from homology"/>
<accession>C7PDD8</accession>
<name>PIP_CHIPD</name>
<keyword id="KW-0031">Aminopeptidase</keyword>
<keyword id="KW-0378">Hydrolase</keyword>
<keyword id="KW-0645">Protease</keyword>
<comment type="function">
    <text evidence="1">Releases the N-terminal proline from various substrates.</text>
</comment>
<comment type="catalytic activity">
    <reaction evidence="1">
        <text>Release of N-terminal proline from a peptide.</text>
        <dbReference type="EC" id="3.4.11.5"/>
    </reaction>
</comment>
<comment type="subunit">
    <text evidence="1">Monomer.</text>
</comment>
<comment type="similarity">
    <text evidence="4">Belongs to the peptidase S33 family.</text>
</comment>
<comment type="sequence caution" evidence="5">
    <conflict type="erroneous initiation">
        <sequence resource="EMBL-CDS" id="ACU57761"/>
    </conflict>
    <text>Extended N-terminus.</text>
</comment>
<gene>
    <name type="ordered locus">Cpin_0261</name>
</gene>
<reference evidence="6" key="1">
    <citation type="submission" date="2009-08" db="EMBL/GenBank/DDBJ databases">
        <title>The complete genome of Chitinophaga pinensis DSM 2588.</title>
        <authorList>
            <consortium name="US DOE Joint Genome Institute (JGI-PGF)"/>
            <person name="Lucas S."/>
            <person name="Copeland A."/>
            <person name="Lapidus A."/>
            <person name="Glavina del Rio T."/>
            <person name="Dalin E."/>
            <person name="Tice H."/>
            <person name="Bruce D."/>
            <person name="Goodwin L."/>
            <person name="Pitluck S."/>
            <person name="Kyrpides N."/>
            <person name="Mavromatis K."/>
            <person name="Ivanova N."/>
            <person name="Mikhailova N."/>
            <person name="Sims D."/>
            <person name="Meinche L."/>
            <person name="Brettin T."/>
            <person name="Detter J.C."/>
            <person name="Han C."/>
            <person name="Larimer F."/>
            <person name="Land M."/>
            <person name="Hauser L."/>
            <person name="Markowitz V."/>
            <person name="Cheng J.-F."/>
            <person name="Hugenholtz P."/>
            <person name="Woyke T."/>
            <person name="Wu D."/>
            <person name="Spring S."/>
            <person name="Klenk H.-P."/>
            <person name="Eisen J.A."/>
        </authorList>
    </citation>
    <scope>NUCLEOTIDE SEQUENCE [LARGE SCALE GENOMIC DNA]</scope>
    <source>
        <strain>ATCC 43595 / DSM 2588 / LMG 13176 / NBRC 15968 / NCIMB 11800 / UQM 2034</strain>
    </source>
</reference>
<feature type="chain" id="PRO_5000508838" description="Proline iminopeptidase">
    <location>
        <begin position="1"/>
        <end position="299"/>
    </location>
</feature>
<feature type="domain" description="AB hydrolase-1" evidence="4">
    <location>
        <begin position="26"/>
        <end position="272"/>
    </location>
</feature>
<feature type="active site" description="Nucleophile" evidence="3">
    <location>
        <position position="103"/>
    </location>
</feature>
<feature type="active site" evidence="2">
    <location>
        <position position="245"/>
    </location>
</feature>
<feature type="active site" description="Proton donor" evidence="3">
    <location>
        <position position="272"/>
    </location>
</feature>
<organism>
    <name type="scientific">Chitinophaga pinensis (strain ATCC 43595 / DSM 2588 / LMG 13176 / NBRC 15968 / NCIMB 11800 / UQM 2034)</name>
    <dbReference type="NCBI Taxonomy" id="485918"/>
    <lineage>
        <taxon>Bacteria</taxon>
        <taxon>Pseudomonadati</taxon>
        <taxon>Bacteroidota</taxon>
        <taxon>Chitinophagia</taxon>
        <taxon>Chitinophagales</taxon>
        <taxon>Chitinophagaceae</taxon>
        <taxon>Chitinophaga</taxon>
    </lineage>
</organism>
<evidence type="ECO:0000250" key="1">
    <source>
        <dbReference type="UniProtKB" id="O05420"/>
    </source>
</evidence>
<evidence type="ECO:0000250" key="2">
    <source>
        <dbReference type="UniProtKB" id="O32449"/>
    </source>
</evidence>
<evidence type="ECO:0000250" key="3">
    <source>
        <dbReference type="UniProtKB" id="P96084"/>
    </source>
</evidence>
<evidence type="ECO:0000255" key="4"/>
<evidence type="ECO:0000305" key="5"/>
<evidence type="ECO:0000312" key="6">
    <source>
        <dbReference type="EMBL" id="ACU57761.1"/>
    </source>
</evidence>